<evidence type="ECO:0000255" key="1">
    <source>
        <dbReference type="HAMAP-Rule" id="MF_00061"/>
    </source>
</evidence>
<reference key="1">
    <citation type="journal article" date="2005" name="Proc. Natl. Acad. Sci. U.S.A.">
        <title>The complete genome sequence of Mycobacterium avium subspecies paratuberculosis.</title>
        <authorList>
            <person name="Li L."/>
            <person name="Bannantine J.P."/>
            <person name="Zhang Q."/>
            <person name="Amonsin A."/>
            <person name="May B.J."/>
            <person name="Alt D."/>
            <person name="Banerji N."/>
            <person name="Kanjilal S."/>
            <person name="Kapur V."/>
        </authorList>
    </citation>
    <scope>NUCLEOTIDE SEQUENCE [LARGE SCALE GENOMIC DNA]</scope>
    <source>
        <strain>ATCC BAA-968 / K-10</strain>
    </source>
</reference>
<gene>
    <name evidence="1" type="primary">ispE</name>
    <name type="ordered locus">MAP_0976</name>
</gene>
<organism>
    <name type="scientific">Mycolicibacterium paratuberculosis (strain ATCC BAA-968 / K-10)</name>
    <name type="common">Mycobacterium paratuberculosis</name>
    <dbReference type="NCBI Taxonomy" id="262316"/>
    <lineage>
        <taxon>Bacteria</taxon>
        <taxon>Bacillati</taxon>
        <taxon>Actinomycetota</taxon>
        <taxon>Actinomycetes</taxon>
        <taxon>Mycobacteriales</taxon>
        <taxon>Mycobacteriaceae</taxon>
        <taxon>Mycobacterium</taxon>
        <taxon>Mycobacterium avium complex (MAC)</taxon>
    </lineage>
</organism>
<accession>Q741W1</accession>
<dbReference type="EC" id="2.7.1.148" evidence="1"/>
<dbReference type="EMBL" id="AE016958">
    <property type="protein sequence ID" value="AAS03293.1"/>
    <property type="molecule type" value="Genomic_DNA"/>
</dbReference>
<dbReference type="RefSeq" id="WP_010949049.1">
    <property type="nucleotide sequence ID" value="NZ_CP106873.1"/>
</dbReference>
<dbReference type="SMR" id="Q741W1"/>
<dbReference type="STRING" id="262316.MAP_0976"/>
<dbReference type="KEGG" id="mpa:MAP_0976"/>
<dbReference type="eggNOG" id="COG1947">
    <property type="taxonomic scope" value="Bacteria"/>
</dbReference>
<dbReference type="HOGENOM" id="CLU_053057_1_1_11"/>
<dbReference type="UniPathway" id="UPA00056">
    <property type="reaction ID" value="UER00094"/>
</dbReference>
<dbReference type="Proteomes" id="UP000000580">
    <property type="component" value="Chromosome"/>
</dbReference>
<dbReference type="GO" id="GO:0050515">
    <property type="term" value="F:4-(cytidine 5'-diphospho)-2-C-methyl-D-erythritol kinase activity"/>
    <property type="evidence" value="ECO:0007669"/>
    <property type="project" value="UniProtKB-UniRule"/>
</dbReference>
<dbReference type="GO" id="GO:0005524">
    <property type="term" value="F:ATP binding"/>
    <property type="evidence" value="ECO:0007669"/>
    <property type="project" value="UniProtKB-UniRule"/>
</dbReference>
<dbReference type="GO" id="GO:0019288">
    <property type="term" value="P:isopentenyl diphosphate biosynthetic process, methylerythritol 4-phosphate pathway"/>
    <property type="evidence" value="ECO:0007669"/>
    <property type="project" value="UniProtKB-UniRule"/>
</dbReference>
<dbReference type="GO" id="GO:0016114">
    <property type="term" value="P:terpenoid biosynthetic process"/>
    <property type="evidence" value="ECO:0007669"/>
    <property type="project" value="InterPro"/>
</dbReference>
<dbReference type="FunFam" id="3.30.230.10:FF:000076">
    <property type="entry name" value="4-diphosphocytidyl-2-C-methyl-D-erythritol kinase"/>
    <property type="match status" value="1"/>
</dbReference>
<dbReference type="Gene3D" id="3.30.230.10">
    <property type="match status" value="1"/>
</dbReference>
<dbReference type="Gene3D" id="3.30.70.890">
    <property type="entry name" value="GHMP kinase, C-terminal domain"/>
    <property type="match status" value="1"/>
</dbReference>
<dbReference type="HAMAP" id="MF_00061">
    <property type="entry name" value="IspE"/>
    <property type="match status" value="1"/>
</dbReference>
<dbReference type="InterPro" id="IPR013750">
    <property type="entry name" value="GHMP_kinase_C_dom"/>
</dbReference>
<dbReference type="InterPro" id="IPR036554">
    <property type="entry name" value="GHMP_kinase_C_sf"/>
</dbReference>
<dbReference type="InterPro" id="IPR006204">
    <property type="entry name" value="GHMP_kinase_N_dom"/>
</dbReference>
<dbReference type="InterPro" id="IPR004424">
    <property type="entry name" value="IspE"/>
</dbReference>
<dbReference type="InterPro" id="IPR020568">
    <property type="entry name" value="Ribosomal_Su5_D2-typ_SF"/>
</dbReference>
<dbReference type="InterPro" id="IPR014721">
    <property type="entry name" value="Ribsml_uS5_D2-typ_fold_subgr"/>
</dbReference>
<dbReference type="NCBIfam" id="TIGR00154">
    <property type="entry name" value="ispE"/>
    <property type="match status" value="1"/>
</dbReference>
<dbReference type="NCBIfam" id="NF002870">
    <property type="entry name" value="PRK03188.1"/>
    <property type="match status" value="1"/>
</dbReference>
<dbReference type="PANTHER" id="PTHR43527">
    <property type="entry name" value="4-DIPHOSPHOCYTIDYL-2-C-METHYL-D-ERYTHRITOL KINASE, CHLOROPLASTIC"/>
    <property type="match status" value="1"/>
</dbReference>
<dbReference type="PANTHER" id="PTHR43527:SF2">
    <property type="entry name" value="4-DIPHOSPHOCYTIDYL-2-C-METHYL-D-ERYTHRITOL KINASE, CHLOROPLASTIC"/>
    <property type="match status" value="1"/>
</dbReference>
<dbReference type="Pfam" id="PF08544">
    <property type="entry name" value="GHMP_kinases_C"/>
    <property type="match status" value="1"/>
</dbReference>
<dbReference type="Pfam" id="PF00288">
    <property type="entry name" value="GHMP_kinases_N"/>
    <property type="match status" value="1"/>
</dbReference>
<dbReference type="PIRSF" id="PIRSF010376">
    <property type="entry name" value="IspE"/>
    <property type="match status" value="1"/>
</dbReference>
<dbReference type="SUPFAM" id="SSF55060">
    <property type="entry name" value="GHMP Kinase, C-terminal domain"/>
    <property type="match status" value="1"/>
</dbReference>
<dbReference type="SUPFAM" id="SSF54211">
    <property type="entry name" value="Ribosomal protein S5 domain 2-like"/>
    <property type="match status" value="1"/>
</dbReference>
<feature type="chain" id="PRO_0000189234" description="4-diphosphocytidyl-2-C-methyl-D-erythritol kinase">
    <location>
        <begin position="1"/>
        <end position="316"/>
    </location>
</feature>
<feature type="active site" evidence="1">
    <location>
        <position position="23"/>
    </location>
</feature>
<feature type="active site" evidence="1">
    <location>
        <position position="150"/>
    </location>
</feature>
<feature type="binding site" evidence="1">
    <location>
        <begin position="108"/>
        <end position="118"/>
    </location>
    <ligand>
        <name>ATP</name>
        <dbReference type="ChEBI" id="CHEBI:30616"/>
    </ligand>
</feature>
<proteinExistence type="inferred from homology"/>
<keyword id="KW-0067">ATP-binding</keyword>
<keyword id="KW-0414">Isoprene biosynthesis</keyword>
<keyword id="KW-0418">Kinase</keyword>
<keyword id="KW-0547">Nucleotide-binding</keyword>
<keyword id="KW-1185">Reference proteome</keyword>
<keyword id="KW-0808">Transferase</keyword>
<protein>
    <recommendedName>
        <fullName evidence="1">4-diphosphocytidyl-2-C-methyl-D-erythritol kinase</fullName>
        <shortName evidence="1">CMK</shortName>
        <ecNumber evidence="1">2.7.1.148</ecNumber>
    </recommendedName>
    <alternativeName>
        <fullName evidence="1">4-(cytidine-5'-diphospho)-2-C-methyl-D-erythritol kinase</fullName>
    </alternativeName>
</protein>
<name>ISPE_MYCPA</name>
<sequence>MSDGNTAAAWVPTGSVTVRVPGKVNLYLAVGDRREDGYHELTTIFQAVSLLDEVTVRNADVLSLDIVGEGADKLPTDERNLAWQAAELMADHVGRAPDVSIMIDKSIPVAGGMAGGSADAAAVLVAMNSLWELNVPRRDLRMLAARLGSDVPFALHGGTALGTGRGEELATVLSRNTFHWVLAFADGELLTRKVFAELDRLRRAGDPPRLPGPGPVLAALAAGDADQLAPLLGNEMQAAAVSLNPGLRRTLRAGVQAGALAGIVSGSGPTCAFLCPSAAAAVDVGTEVSGVGVCRTVRVASGPVAGARVVPAPTEV</sequence>
<comment type="function">
    <text evidence="1">Catalyzes the phosphorylation of the position 2 hydroxy group of 4-diphosphocytidyl-2C-methyl-D-erythritol.</text>
</comment>
<comment type="catalytic activity">
    <reaction evidence="1">
        <text>4-CDP-2-C-methyl-D-erythritol + ATP = 4-CDP-2-C-methyl-D-erythritol 2-phosphate + ADP + H(+)</text>
        <dbReference type="Rhea" id="RHEA:18437"/>
        <dbReference type="ChEBI" id="CHEBI:15378"/>
        <dbReference type="ChEBI" id="CHEBI:30616"/>
        <dbReference type="ChEBI" id="CHEBI:57823"/>
        <dbReference type="ChEBI" id="CHEBI:57919"/>
        <dbReference type="ChEBI" id="CHEBI:456216"/>
        <dbReference type="EC" id="2.7.1.148"/>
    </reaction>
</comment>
<comment type="pathway">
    <text evidence="1">Isoprenoid biosynthesis; isopentenyl diphosphate biosynthesis via DXP pathway; isopentenyl diphosphate from 1-deoxy-D-xylulose 5-phosphate: step 3/6.</text>
</comment>
<comment type="similarity">
    <text evidence="1">Belongs to the GHMP kinase family. IspE subfamily.</text>
</comment>